<sequence>MKYELKTTSGNARRGRLTFSRPKGEYVVETPAFMPVGTYGTVKGMTPEEVAATGAQILLGNTFHLWLRPGQEVMKSHGDLHGFMQWHGPILTDSGGFQVFSLGKLRKIKEEGVTFQNPISGEKIFLSPEKSMEIQYDLGSDIVMIFDECTPYPATFDYAKNSMEMSLRWAKRSRDRFDELQNPRALFGIVQGGTYEELRKISVEGLVNIGFDGYAVGGLAVGEPKEEMHRILEFTTPLLPQDKPRYLMGVGKPEDLVEGVRRGIDMFDCVMPTRNARNGHLFVSNGIVKIRNAKYKTDTTPLDPECDCYTCKNYTKAYLYHLDKCGEILGARLNTIHNLRYYQRLMAQIRQAIEEDRFDDFVVEFYAKIGKEVPPLQSEVNK</sequence>
<protein>
    <recommendedName>
        <fullName evidence="1">Queuine tRNA-ribosyltransferase</fullName>
        <ecNumber evidence="1">2.4.2.29</ecNumber>
    </recommendedName>
    <alternativeName>
        <fullName evidence="1">Guanine insertion enzyme</fullName>
    </alternativeName>
    <alternativeName>
        <fullName evidence="1">tRNA-guanine transglycosylase</fullName>
    </alternativeName>
</protein>
<gene>
    <name evidence="1" type="primary">tgt</name>
    <name type="ordered locus">APL_0723</name>
</gene>
<proteinExistence type="inferred from homology"/>
<accession>A3N087</accession>
<evidence type="ECO:0000255" key="1">
    <source>
        <dbReference type="HAMAP-Rule" id="MF_00168"/>
    </source>
</evidence>
<dbReference type="EC" id="2.4.2.29" evidence="1"/>
<dbReference type="EMBL" id="CP000569">
    <property type="protein sequence ID" value="ABN73823.1"/>
    <property type="molecule type" value="Genomic_DNA"/>
</dbReference>
<dbReference type="RefSeq" id="WP_005600941.1">
    <property type="nucleotide sequence ID" value="NC_009053.1"/>
</dbReference>
<dbReference type="SMR" id="A3N087"/>
<dbReference type="STRING" id="416269.APL_0723"/>
<dbReference type="EnsemblBacteria" id="ABN73823">
    <property type="protein sequence ID" value="ABN73823"/>
    <property type="gene ID" value="APL_0723"/>
</dbReference>
<dbReference type="KEGG" id="apl:APL_0723"/>
<dbReference type="eggNOG" id="COG0343">
    <property type="taxonomic scope" value="Bacteria"/>
</dbReference>
<dbReference type="HOGENOM" id="CLU_022060_0_1_6"/>
<dbReference type="UniPathway" id="UPA00392"/>
<dbReference type="Proteomes" id="UP000001432">
    <property type="component" value="Chromosome"/>
</dbReference>
<dbReference type="GO" id="GO:0005829">
    <property type="term" value="C:cytosol"/>
    <property type="evidence" value="ECO:0007669"/>
    <property type="project" value="TreeGrafter"/>
</dbReference>
<dbReference type="GO" id="GO:0046872">
    <property type="term" value="F:metal ion binding"/>
    <property type="evidence" value="ECO:0007669"/>
    <property type="project" value="UniProtKB-KW"/>
</dbReference>
<dbReference type="GO" id="GO:0008479">
    <property type="term" value="F:tRNA-guanosine(34) queuine transglycosylase activity"/>
    <property type="evidence" value="ECO:0007669"/>
    <property type="project" value="UniProtKB-UniRule"/>
</dbReference>
<dbReference type="GO" id="GO:0008616">
    <property type="term" value="P:queuosine biosynthetic process"/>
    <property type="evidence" value="ECO:0007669"/>
    <property type="project" value="UniProtKB-UniRule"/>
</dbReference>
<dbReference type="GO" id="GO:0002099">
    <property type="term" value="P:tRNA wobble guanine modification"/>
    <property type="evidence" value="ECO:0007669"/>
    <property type="project" value="TreeGrafter"/>
</dbReference>
<dbReference type="GO" id="GO:0101030">
    <property type="term" value="P:tRNA-guanine transglycosylation"/>
    <property type="evidence" value="ECO:0007669"/>
    <property type="project" value="InterPro"/>
</dbReference>
<dbReference type="FunFam" id="3.20.20.105:FF:000001">
    <property type="entry name" value="Queuine tRNA-ribosyltransferase"/>
    <property type="match status" value="1"/>
</dbReference>
<dbReference type="Gene3D" id="3.20.20.105">
    <property type="entry name" value="Queuine tRNA-ribosyltransferase-like"/>
    <property type="match status" value="1"/>
</dbReference>
<dbReference type="HAMAP" id="MF_00168">
    <property type="entry name" value="Q_tRNA_Tgt"/>
    <property type="match status" value="1"/>
</dbReference>
<dbReference type="InterPro" id="IPR050076">
    <property type="entry name" value="ArchSynthase1/Queuine_TRR"/>
</dbReference>
<dbReference type="InterPro" id="IPR004803">
    <property type="entry name" value="TGT"/>
</dbReference>
<dbReference type="InterPro" id="IPR036511">
    <property type="entry name" value="TGT-like_sf"/>
</dbReference>
<dbReference type="InterPro" id="IPR002616">
    <property type="entry name" value="tRNA_ribo_trans-like"/>
</dbReference>
<dbReference type="NCBIfam" id="TIGR00430">
    <property type="entry name" value="Q_tRNA_tgt"/>
    <property type="match status" value="1"/>
</dbReference>
<dbReference type="NCBIfam" id="TIGR00449">
    <property type="entry name" value="tgt_general"/>
    <property type="match status" value="1"/>
</dbReference>
<dbReference type="PANTHER" id="PTHR46499">
    <property type="entry name" value="QUEUINE TRNA-RIBOSYLTRANSFERASE"/>
    <property type="match status" value="1"/>
</dbReference>
<dbReference type="PANTHER" id="PTHR46499:SF1">
    <property type="entry name" value="QUEUINE TRNA-RIBOSYLTRANSFERASE"/>
    <property type="match status" value="1"/>
</dbReference>
<dbReference type="Pfam" id="PF01702">
    <property type="entry name" value="TGT"/>
    <property type="match status" value="1"/>
</dbReference>
<dbReference type="SUPFAM" id="SSF51713">
    <property type="entry name" value="tRNA-guanine transglycosylase"/>
    <property type="match status" value="1"/>
</dbReference>
<organism>
    <name type="scientific">Actinobacillus pleuropneumoniae serotype 5b (strain L20)</name>
    <dbReference type="NCBI Taxonomy" id="416269"/>
    <lineage>
        <taxon>Bacteria</taxon>
        <taxon>Pseudomonadati</taxon>
        <taxon>Pseudomonadota</taxon>
        <taxon>Gammaproteobacteria</taxon>
        <taxon>Pasteurellales</taxon>
        <taxon>Pasteurellaceae</taxon>
        <taxon>Actinobacillus</taxon>
    </lineage>
</organism>
<reference key="1">
    <citation type="journal article" date="2008" name="J. Bacteriol.">
        <title>The complete genome sequence of Actinobacillus pleuropneumoniae L20 (serotype 5b).</title>
        <authorList>
            <person name="Foote S.J."/>
            <person name="Bosse J.T."/>
            <person name="Bouevitch A.B."/>
            <person name="Langford P.R."/>
            <person name="Young N.M."/>
            <person name="Nash J.H.E."/>
        </authorList>
    </citation>
    <scope>NUCLEOTIDE SEQUENCE [LARGE SCALE GENOMIC DNA]</scope>
    <source>
        <strain>L20</strain>
    </source>
</reference>
<feature type="chain" id="PRO_1000058275" description="Queuine tRNA-ribosyltransferase">
    <location>
        <begin position="1"/>
        <end position="382"/>
    </location>
</feature>
<feature type="region of interest" description="RNA binding" evidence="1">
    <location>
        <begin position="249"/>
        <end position="255"/>
    </location>
</feature>
<feature type="region of interest" description="RNA binding; important for wobble base 34 recognition" evidence="1">
    <location>
        <begin position="273"/>
        <end position="277"/>
    </location>
</feature>
<feature type="active site" description="Proton acceptor" evidence="1">
    <location>
        <position position="93"/>
    </location>
</feature>
<feature type="active site" description="Nucleophile" evidence="1">
    <location>
        <position position="268"/>
    </location>
</feature>
<feature type="binding site" evidence="1">
    <location>
        <begin position="93"/>
        <end position="97"/>
    </location>
    <ligand>
        <name>substrate</name>
    </ligand>
</feature>
<feature type="binding site" evidence="1">
    <location>
        <position position="147"/>
    </location>
    <ligand>
        <name>substrate</name>
    </ligand>
</feature>
<feature type="binding site" evidence="1">
    <location>
        <position position="191"/>
    </location>
    <ligand>
        <name>substrate</name>
    </ligand>
</feature>
<feature type="binding site" evidence="1">
    <location>
        <position position="218"/>
    </location>
    <ligand>
        <name>substrate</name>
    </ligand>
</feature>
<feature type="binding site" evidence="1">
    <location>
        <position position="306"/>
    </location>
    <ligand>
        <name>Zn(2+)</name>
        <dbReference type="ChEBI" id="CHEBI:29105"/>
    </ligand>
</feature>
<feature type="binding site" evidence="1">
    <location>
        <position position="308"/>
    </location>
    <ligand>
        <name>Zn(2+)</name>
        <dbReference type="ChEBI" id="CHEBI:29105"/>
    </ligand>
</feature>
<feature type="binding site" evidence="1">
    <location>
        <position position="311"/>
    </location>
    <ligand>
        <name>Zn(2+)</name>
        <dbReference type="ChEBI" id="CHEBI:29105"/>
    </ligand>
</feature>
<feature type="binding site" evidence="1">
    <location>
        <position position="337"/>
    </location>
    <ligand>
        <name>Zn(2+)</name>
        <dbReference type="ChEBI" id="CHEBI:29105"/>
    </ligand>
</feature>
<comment type="function">
    <text evidence="1">Catalyzes the base-exchange of a guanine (G) residue with the queuine precursor 7-aminomethyl-7-deazaguanine (PreQ1) at position 34 (anticodon wobble position) in tRNAs with GU(N) anticodons (tRNA-Asp, -Asn, -His and -Tyr). Catalysis occurs through a double-displacement mechanism. The nucleophile active site attacks the C1' of nucleotide 34 to detach the guanine base from the RNA, forming a covalent enzyme-RNA intermediate. The proton acceptor active site deprotonates the incoming PreQ1, allowing a nucleophilic attack on the C1' of the ribose to form the product. After dissociation, two additional enzymatic reactions on the tRNA convert PreQ1 to queuine (Q), resulting in the hypermodified nucleoside queuosine (7-(((4,5-cis-dihydroxy-2-cyclopenten-1-yl)amino)methyl)-7-deazaguanosine).</text>
</comment>
<comment type="catalytic activity">
    <reaction evidence="1">
        <text>7-aminomethyl-7-carbaguanine + guanosine(34) in tRNA = 7-aminomethyl-7-carbaguanosine(34) in tRNA + guanine</text>
        <dbReference type="Rhea" id="RHEA:24104"/>
        <dbReference type="Rhea" id="RHEA-COMP:10341"/>
        <dbReference type="Rhea" id="RHEA-COMP:10342"/>
        <dbReference type="ChEBI" id="CHEBI:16235"/>
        <dbReference type="ChEBI" id="CHEBI:58703"/>
        <dbReference type="ChEBI" id="CHEBI:74269"/>
        <dbReference type="ChEBI" id="CHEBI:82833"/>
        <dbReference type="EC" id="2.4.2.29"/>
    </reaction>
</comment>
<comment type="cofactor">
    <cofactor evidence="1">
        <name>Zn(2+)</name>
        <dbReference type="ChEBI" id="CHEBI:29105"/>
    </cofactor>
    <text evidence="1">Binds 1 zinc ion per subunit.</text>
</comment>
<comment type="pathway">
    <text evidence="1">tRNA modification; tRNA-queuosine biosynthesis.</text>
</comment>
<comment type="subunit">
    <text evidence="1">Homodimer. Within each dimer, one monomer is responsible for RNA recognition and catalysis, while the other monomer binds to the replacement base PreQ1.</text>
</comment>
<comment type="similarity">
    <text evidence="1">Belongs to the queuine tRNA-ribosyltransferase family.</text>
</comment>
<keyword id="KW-0328">Glycosyltransferase</keyword>
<keyword id="KW-0479">Metal-binding</keyword>
<keyword id="KW-0671">Queuosine biosynthesis</keyword>
<keyword id="KW-1185">Reference proteome</keyword>
<keyword id="KW-0808">Transferase</keyword>
<keyword id="KW-0819">tRNA processing</keyword>
<keyword id="KW-0862">Zinc</keyword>
<name>TGT_ACTP2</name>